<reference key="1">
    <citation type="submission" date="2006-08" db="EMBL/GenBank/DDBJ databases">
        <title>Complete sequence of Shewanella sp. MR-4.</title>
        <authorList>
            <consortium name="US DOE Joint Genome Institute"/>
            <person name="Copeland A."/>
            <person name="Lucas S."/>
            <person name="Lapidus A."/>
            <person name="Barry K."/>
            <person name="Detter J.C."/>
            <person name="Glavina del Rio T."/>
            <person name="Hammon N."/>
            <person name="Israni S."/>
            <person name="Dalin E."/>
            <person name="Tice H."/>
            <person name="Pitluck S."/>
            <person name="Kiss H."/>
            <person name="Brettin T."/>
            <person name="Bruce D."/>
            <person name="Han C."/>
            <person name="Tapia R."/>
            <person name="Gilna P."/>
            <person name="Schmutz J."/>
            <person name="Larimer F."/>
            <person name="Land M."/>
            <person name="Hauser L."/>
            <person name="Kyrpides N."/>
            <person name="Mikhailova N."/>
            <person name="Nealson K."/>
            <person name="Konstantinidis K."/>
            <person name="Klappenbach J."/>
            <person name="Tiedje J."/>
            <person name="Richardson P."/>
        </authorList>
    </citation>
    <scope>NUCLEOTIDE SEQUENCE [LARGE SCALE GENOMIC DNA]</scope>
    <source>
        <strain>MR-4</strain>
    </source>
</reference>
<gene>
    <name evidence="1" type="primary">luxS</name>
    <name type="ordered locus">Shewmr4_0934</name>
</gene>
<accession>Q0HLQ3</accession>
<keyword id="KW-0071">Autoinducer synthesis</keyword>
<keyword id="KW-0408">Iron</keyword>
<keyword id="KW-0456">Lyase</keyword>
<keyword id="KW-0479">Metal-binding</keyword>
<keyword id="KW-0673">Quorum sensing</keyword>
<organism>
    <name type="scientific">Shewanella sp. (strain MR-4)</name>
    <dbReference type="NCBI Taxonomy" id="60480"/>
    <lineage>
        <taxon>Bacteria</taxon>
        <taxon>Pseudomonadati</taxon>
        <taxon>Pseudomonadota</taxon>
        <taxon>Gammaproteobacteria</taxon>
        <taxon>Alteromonadales</taxon>
        <taxon>Shewanellaceae</taxon>
        <taxon>Shewanella</taxon>
    </lineage>
</organism>
<evidence type="ECO:0000255" key="1">
    <source>
        <dbReference type="HAMAP-Rule" id="MF_00091"/>
    </source>
</evidence>
<dbReference type="EC" id="4.4.1.21" evidence="1"/>
<dbReference type="EMBL" id="CP000446">
    <property type="protein sequence ID" value="ABI38014.1"/>
    <property type="molecule type" value="Genomic_DNA"/>
</dbReference>
<dbReference type="RefSeq" id="WP_011621728.1">
    <property type="nucleotide sequence ID" value="NC_008321.1"/>
</dbReference>
<dbReference type="SMR" id="Q0HLQ3"/>
<dbReference type="KEGG" id="she:Shewmr4_0934"/>
<dbReference type="HOGENOM" id="CLU_107531_2_0_6"/>
<dbReference type="GO" id="GO:0005506">
    <property type="term" value="F:iron ion binding"/>
    <property type="evidence" value="ECO:0007669"/>
    <property type="project" value="InterPro"/>
</dbReference>
<dbReference type="GO" id="GO:0043768">
    <property type="term" value="F:S-ribosylhomocysteine lyase activity"/>
    <property type="evidence" value="ECO:0007669"/>
    <property type="project" value="UniProtKB-UniRule"/>
</dbReference>
<dbReference type="GO" id="GO:0009372">
    <property type="term" value="P:quorum sensing"/>
    <property type="evidence" value="ECO:0007669"/>
    <property type="project" value="UniProtKB-UniRule"/>
</dbReference>
<dbReference type="FunFam" id="3.30.1360.80:FF:000001">
    <property type="entry name" value="S-ribosylhomocysteine lyase"/>
    <property type="match status" value="1"/>
</dbReference>
<dbReference type="Gene3D" id="3.30.1360.80">
    <property type="entry name" value="S-ribosylhomocysteinase (LuxS)"/>
    <property type="match status" value="1"/>
</dbReference>
<dbReference type="HAMAP" id="MF_00091">
    <property type="entry name" value="LuxS"/>
    <property type="match status" value="1"/>
</dbReference>
<dbReference type="InterPro" id="IPR037005">
    <property type="entry name" value="LuxS_sf"/>
</dbReference>
<dbReference type="InterPro" id="IPR011249">
    <property type="entry name" value="Metalloenz_LuxS/M16"/>
</dbReference>
<dbReference type="InterPro" id="IPR003815">
    <property type="entry name" value="S-ribosylhomocysteinase"/>
</dbReference>
<dbReference type="NCBIfam" id="NF002602">
    <property type="entry name" value="PRK02260.1-2"/>
    <property type="match status" value="1"/>
</dbReference>
<dbReference type="PANTHER" id="PTHR35799">
    <property type="entry name" value="S-RIBOSYLHOMOCYSTEINE LYASE"/>
    <property type="match status" value="1"/>
</dbReference>
<dbReference type="PANTHER" id="PTHR35799:SF1">
    <property type="entry name" value="S-RIBOSYLHOMOCYSTEINE LYASE"/>
    <property type="match status" value="1"/>
</dbReference>
<dbReference type="Pfam" id="PF02664">
    <property type="entry name" value="LuxS"/>
    <property type="match status" value="1"/>
</dbReference>
<dbReference type="PIRSF" id="PIRSF006160">
    <property type="entry name" value="AI2"/>
    <property type="match status" value="1"/>
</dbReference>
<dbReference type="PRINTS" id="PR01487">
    <property type="entry name" value="LUXSPROTEIN"/>
</dbReference>
<dbReference type="SUPFAM" id="SSF63411">
    <property type="entry name" value="LuxS/MPP-like metallohydrolase"/>
    <property type="match status" value="1"/>
</dbReference>
<feature type="chain" id="PRO_0000298027" description="S-ribosylhomocysteine lyase">
    <location>
        <begin position="1"/>
        <end position="169"/>
    </location>
</feature>
<feature type="binding site" evidence="1">
    <location>
        <position position="54"/>
    </location>
    <ligand>
        <name>Fe cation</name>
        <dbReference type="ChEBI" id="CHEBI:24875"/>
    </ligand>
</feature>
<feature type="binding site" evidence="1">
    <location>
        <position position="58"/>
    </location>
    <ligand>
        <name>Fe cation</name>
        <dbReference type="ChEBI" id="CHEBI:24875"/>
    </ligand>
</feature>
<feature type="binding site" evidence="1">
    <location>
        <position position="128"/>
    </location>
    <ligand>
        <name>Fe cation</name>
        <dbReference type="ChEBI" id="CHEBI:24875"/>
    </ligand>
</feature>
<comment type="function">
    <text evidence="1">Involved in the synthesis of autoinducer 2 (AI-2) which is secreted by bacteria and is used to communicate both the cell density and the metabolic potential of the environment. The regulation of gene expression in response to changes in cell density is called quorum sensing. Catalyzes the transformation of S-ribosylhomocysteine (RHC) to homocysteine (HC) and 4,5-dihydroxy-2,3-pentadione (DPD).</text>
</comment>
<comment type="catalytic activity">
    <reaction evidence="1">
        <text>S-(5-deoxy-D-ribos-5-yl)-L-homocysteine = (S)-4,5-dihydroxypentane-2,3-dione + L-homocysteine</text>
        <dbReference type="Rhea" id="RHEA:17753"/>
        <dbReference type="ChEBI" id="CHEBI:29484"/>
        <dbReference type="ChEBI" id="CHEBI:58195"/>
        <dbReference type="ChEBI" id="CHEBI:58199"/>
        <dbReference type="EC" id="4.4.1.21"/>
    </reaction>
</comment>
<comment type="cofactor">
    <cofactor evidence="1">
        <name>Fe cation</name>
        <dbReference type="ChEBI" id="CHEBI:24875"/>
    </cofactor>
    <text evidence="1">Binds 1 Fe cation per subunit.</text>
</comment>
<comment type="subunit">
    <text evidence="1">Homodimer.</text>
</comment>
<comment type="similarity">
    <text evidence="1">Belongs to the LuxS family.</text>
</comment>
<sequence>MPLLDSFTVDHTRMNAPAVRVAKHMSTPKGDAITVFDLRFCAPNKDILSERGIHTLEHLFAGFMRDHLNGSDVEIIDISPMGCRTGFYMSLIGEPSERQVADAWLASMEDVLKVVEQSEIPELNEYQCGTYQMHSLEQAQDIARNIIAAGVSVNRNDDLKLSDEILGKL</sequence>
<name>LUXS_SHESM</name>
<proteinExistence type="inferred from homology"/>
<protein>
    <recommendedName>
        <fullName evidence="1">S-ribosylhomocysteine lyase</fullName>
        <ecNumber evidence="1">4.4.1.21</ecNumber>
    </recommendedName>
    <alternativeName>
        <fullName evidence="1">AI-2 synthesis protein</fullName>
    </alternativeName>
    <alternativeName>
        <fullName evidence="1">Autoinducer-2 production protein LuxS</fullName>
    </alternativeName>
</protein>